<organism>
    <name type="scientific">Gibberella zeae (strain ATCC MYA-4620 / CBS 123657 / FGSC 9075 / NRRL 31084 / PH-1)</name>
    <name type="common">Wheat head blight fungus</name>
    <name type="synonym">Fusarium graminearum</name>
    <dbReference type="NCBI Taxonomy" id="229533"/>
    <lineage>
        <taxon>Eukaryota</taxon>
        <taxon>Fungi</taxon>
        <taxon>Dikarya</taxon>
        <taxon>Ascomycota</taxon>
        <taxon>Pezizomycotina</taxon>
        <taxon>Sordariomycetes</taxon>
        <taxon>Hypocreomycetidae</taxon>
        <taxon>Hypocreales</taxon>
        <taxon>Nectriaceae</taxon>
        <taxon>Fusarium</taxon>
    </lineage>
</organism>
<name>PPIH_GIBZE</name>
<gene>
    <name type="primary">CYP3</name>
    <name type="ORF">FGRRES_00884</name>
    <name type="ORF">FGSG_00884</name>
</gene>
<sequence length="182" mass="20041">MPPTKLPESGNPLVFFDITIGGEPLGRITFELFKDVVPKTAENFRQFCTGESKTPVGRPQGYKGSKFHRIIPNFMCQGGDFLNGDGTGSTCIWGFKSFEDENFTLKHDQPGLLSMANAGPNTNGSQFFITTVPTPFLDNKHVVFGKVFEGMDVVKKMEATKTGYRGKDMPNLDVVISQCGEM</sequence>
<protein>
    <recommendedName>
        <fullName>Peptidyl-prolyl cis-trans isomerase H</fullName>
        <shortName>PPIase H</shortName>
        <ecNumber>5.2.1.8</ecNumber>
    </recommendedName>
    <alternativeName>
        <fullName>Rotamase H</fullName>
    </alternativeName>
</protein>
<evidence type="ECO:0000250" key="1"/>
<evidence type="ECO:0000255" key="2">
    <source>
        <dbReference type="PROSITE-ProRule" id="PRU00156"/>
    </source>
</evidence>
<evidence type="ECO:0000305" key="3"/>
<reference key="1">
    <citation type="journal article" date="2007" name="Science">
        <title>The Fusarium graminearum genome reveals a link between localized polymorphism and pathogen specialization.</title>
        <authorList>
            <person name="Cuomo C.A."/>
            <person name="Gueldener U."/>
            <person name="Xu J.-R."/>
            <person name="Trail F."/>
            <person name="Turgeon B.G."/>
            <person name="Di Pietro A."/>
            <person name="Walton J.D."/>
            <person name="Ma L.-J."/>
            <person name="Baker S.E."/>
            <person name="Rep M."/>
            <person name="Adam G."/>
            <person name="Antoniw J."/>
            <person name="Baldwin T."/>
            <person name="Calvo S.E."/>
            <person name="Chang Y.-L."/>
            <person name="DeCaprio D."/>
            <person name="Gale L.R."/>
            <person name="Gnerre S."/>
            <person name="Goswami R.S."/>
            <person name="Hammond-Kosack K."/>
            <person name="Harris L.J."/>
            <person name="Hilburn K."/>
            <person name="Kennell J.C."/>
            <person name="Kroken S."/>
            <person name="Magnuson J.K."/>
            <person name="Mannhaupt G."/>
            <person name="Mauceli E.W."/>
            <person name="Mewes H.-W."/>
            <person name="Mitterbauer R."/>
            <person name="Muehlbauer G."/>
            <person name="Muensterkoetter M."/>
            <person name="Nelson D."/>
            <person name="O'Donnell K."/>
            <person name="Ouellet T."/>
            <person name="Qi W."/>
            <person name="Quesneville H."/>
            <person name="Roncero M.I.G."/>
            <person name="Seong K.-Y."/>
            <person name="Tetko I.V."/>
            <person name="Urban M."/>
            <person name="Waalwijk C."/>
            <person name="Ward T.J."/>
            <person name="Yao J."/>
            <person name="Birren B.W."/>
            <person name="Kistler H.C."/>
        </authorList>
    </citation>
    <scope>NUCLEOTIDE SEQUENCE [LARGE SCALE GENOMIC DNA]</scope>
    <source>
        <strain>ATCC MYA-4620 / CBS 123657 / FGSC 9075 / NRRL 31084 / PH-1</strain>
    </source>
</reference>
<reference key="2">
    <citation type="journal article" date="2010" name="Nature">
        <title>Comparative genomics reveals mobile pathogenicity chromosomes in Fusarium.</title>
        <authorList>
            <person name="Ma L.-J."/>
            <person name="van der Does H.C."/>
            <person name="Borkovich K.A."/>
            <person name="Coleman J.J."/>
            <person name="Daboussi M.-J."/>
            <person name="Di Pietro A."/>
            <person name="Dufresne M."/>
            <person name="Freitag M."/>
            <person name="Grabherr M."/>
            <person name="Henrissat B."/>
            <person name="Houterman P.M."/>
            <person name="Kang S."/>
            <person name="Shim W.-B."/>
            <person name="Woloshuk C."/>
            <person name="Xie X."/>
            <person name="Xu J.-R."/>
            <person name="Antoniw J."/>
            <person name="Baker S.E."/>
            <person name="Bluhm B.H."/>
            <person name="Breakspear A."/>
            <person name="Brown D.W."/>
            <person name="Butchko R.A.E."/>
            <person name="Chapman S."/>
            <person name="Coulson R."/>
            <person name="Coutinho P.M."/>
            <person name="Danchin E.G.J."/>
            <person name="Diener A."/>
            <person name="Gale L.R."/>
            <person name="Gardiner D.M."/>
            <person name="Goff S."/>
            <person name="Hammond-Kosack K.E."/>
            <person name="Hilburn K."/>
            <person name="Hua-Van A."/>
            <person name="Jonkers W."/>
            <person name="Kazan K."/>
            <person name="Kodira C.D."/>
            <person name="Koehrsen M."/>
            <person name="Kumar L."/>
            <person name="Lee Y.-H."/>
            <person name="Li L."/>
            <person name="Manners J.M."/>
            <person name="Miranda-Saavedra D."/>
            <person name="Mukherjee M."/>
            <person name="Park G."/>
            <person name="Park J."/>
            <person name="Park S.-Y."/>
            <person name="Proctor R.H."/>
            <person name="Regev A."/>
            <person name="Ruiz-Roldan M.C."/>
            <person name="Sain D."/>
            <person name="Sakthikumar S."/>
            <person name="Sykes S."/>
            <person name="Schwartz D.C."/>
            <person name="Turgeon B.G."/>
            <person name="Wapinski I."/>
            <person name="Yoder O."/>
            <person name="Young S."/>
            <person name="Zeng Q."/>
            <person name="Zhou S."/>
            <person name="Galagan J."/>
            <person name="Cuomo C.A."/>
            <person name="Kistler H.C."/>
            <person name="Rep M."/>
        </authorList>
    </citation>
    <scope>GENOME REANNOTATION</scope>
    <source>
        <strain>ATCC MYA-4620 / CBS 123657 / FGSC 9075 / NRRL 31084 / PH-1</strain>
    </source>
</reference>
<reference key="3">
    <citation type="journal article" date="2015" name="BMC Genomics">
        <title>The completed genome sequence of the pathogenic ascomycete fungus Fusarium graminearum.</title>
        <authorList>
            <person name="King R."/>
            <person name="Urban M."/>
            <person name="Hammond-Kosack M.C.U."/>
            <person name="Hassani-Pak K."/>
            <person name="Hammond-Kosack K.E."/>
        </authorList>
    </citation>
    <scope>NUCLEOTIDE SEQUENCE [LARGE SCALE GENOMIC DNA]</scope>
    <source>
        <strain>ATCC MYA-4620 / CBS 123657 / FGSC 9075 / NRRL 31084 / PH-1</strain>
    </source>
</reference>
<accession>Q4IPH4</accession>
<accession>A0A0E0RNT2</accession>
<accession>V6QUX4</accession>
<feature type="chain" id="PRO_0000232957" description="Peptidyl-prolyl cis-trans isomerase H">
    <location>
        <begin position="1"/>
        <end position="182"/>
    </location>
</feature>
<feature type="domain" description="PPIase cyclophilin-type" evidence="2">
    <location>
        <begin position="15"/>
        <end position="181"/>
    </location>
</feature>
<comment type="function">
    <text evidence="1">PPIases accelerate the folding of proteins. It catalyzes the cis-trans isomerization of proline imidic peptide bonds in oligopeptides (By similarity).</text>
</comment>
<comment type="catalytic activity">
    <reaction>
        <text>[protein]-peptidylproline (omega=180) = [protein]-peptidylproline (omega=0)</text>
        <dbReference type="Rhea" id="RHEA:16237"/>
        <dbReference type="Rhea" id="RHEA-COMP:10747"/>
        <dbReference type="Rhea" id="RHEA-COMP:10748"/>
        <dbReference type="ChEBI" id="CHEBI:83833"/>
        <dbReference type="ChEBI" id="CHEBI:83834"/>
        <dbReference type="EC" id="5.2.1.8"/>
    </reaction>
</comment>
<comment type="subcellular location">
    <subcellularLocation>
        <location evidence="1">Nucleus</location>
    </subcellularLocation>
</comment>
<comment type="similarity">
    <text evidence="3">Belongs to the cyclophilin-type PPIase family. PPIase H subfamily.</text>
</comment>
<proteinExistence type="inferred from homology"/>
<dbReference type="EC" id="5.2.1.8"/>
<dbReference type="EMBL" id="DS231663">
    <property type="protein sequence ID" value="ESU06128.1"/>
    <property type="molecule type" value="Genomic_DNA"/>
</dbReference>
<dbReference type="EMBL" id="HG970332">
    <property type="protein sequence ID" value="CEF72907.1"/>
    <property type="molecule type" value="Genomic_DNA"/>
</dbReference>
<dbReference type="RefSeq" id="XP_011316613.1">
    <property type="nucleotide sequence ID" value="XM_011318311.1"/>
</dbReference>
<dbReference type="SMR" id="Q4IPH4"/>
<dbReference type="STRING" id="229533.Q4IPH4"/>
<dbReference type="GeneID" id="23548351"/>
<dbReference type="KEGG" id="fgr:FGSG_00884"/>
<dbReference type="VEuPathDB" id="FungiDB:FGRAMPH1_01G02213"/>
<dbReference type="eggNOG" id="KOG0879">
    <property type="taxonomic scope" value="Eukaryota"/>
</dbReference>
<dbReference type="HOGENOM" id="CLU_012062_4_3_1"/>
<dbReference type="InParanoid" id="Q4IPH4"/>
<dbReference type="OrthoDB" id="47321at110618"/>
<dbReference type="Proteomes" id="UP000070720">
    <property type="component" value="Chromosome 1"/>
</dbReference>
<dbReference type="GO" id="GO:0005737">
    <property type="term" value="C:cytoplasm"/>
    <property type="evidence" value="ECO:0007669"/>
    <property type="project" value="TreeGrafter"/>
</dbReference>
<dbReference type="GO" id="GO:0005634">
    <property type="term" value="C:nucleus"/>
    <property type="evidence" value="ECO:0007669"/>
    <property type="project" value="UniProtKB-SubCell"/>
</dbReference>
<dbReference type="GO" id="GO:0016018">
    <property type="term" value="F:cyclosporin A binding"/>
    <property type="evidence" value="ECO:0007669"/>
    <property type="project" value="TreeGrafter"/>
</dbReference>
<dbReference type="GO" id="GO:0003755">
    <property type="term" value="F:peptidyl-prolyl cis-trans isomerase activity"/>
    <property type="evidence" value="ECO:0007669"/>
    <property type="project" value="UniProtKB-KW"/>
</dbReference>
<dbReference type="GO" id="GO:0006457">
    <property type="term" value="P:protein folding"/>
    <property type="evidence" value="ECO:0007669"/>
    <property type="project" value="InterPro"/>
</dbReference>
<dbReference type="CDD" id="cd01926">
    <property type="entry name" value="cyclophilin_ABH_like"/>
    <property type="match status" value="1"/>
</dbReference>
<dbReference type="FunFam" id="2.40.100.10:FF:000035">
    <property type="entry name" value="Peptidyl-prolyl cis-trans isomerase"/>
    <property type="match status" value="1"/>
</dbReference>
<dbReference type="Gene3D" id="2.40.100.10">
    <property type="entry name" value="Cyclophilin-like"/>
    <property type="match status" value="1"/>
</dbReference>
<dbReference type="InterPro" id="IPR029000">
    <property type="entry name" value="Cyclophilin-like_dom_sf"/>
</dbReference>
<dbReference type="InterPro" id="IPR024936">
    <property type="entry name" value="Cyclophilin-type_PPIase"/>
</dbReference>
<dbReference type="InterPro" id="IPR020892">
    <property type="entry name" value="Cyclophilin-type_PPIase_CS"/>
</dbReference>
<dbReference type="InterPro" id="IPR002130">
    <property type="entry name" value="Cyclophilin-type_PPIase_dom"/>
</dbReference>
<dbReference type="PANTHER" id="PTHR11071">
    <property type="entry name" value="PEPTIDYL-PROLYL CIS-TRANS ISOMERASE"/>
    <property type="match status" value="1"/>
</dbReference>
<dbReference type="PANTHER" id="PTHR11071:SF561">
    <property type="entry name" value="PEPTIDYL-PROLYL CIS-TRANS ISOMERASE D-RELATED"/>
    <property type="match status" value="1"/>
</dbReference>
<dbReference type="Pfam" id="PF00160">
    <property type="entry name" value="Pro_isomerase"/>
    <property type="match status" value="1"/>
</dbReference>
<dbReference type="PIRSF" id="PIRSF001467">
    <property type="entry name" value="Peptidylpro_ismrse"/>
    <property type="match status" value="1"/>
</dbReference>
<dbReference type="PRINTS" id="PR00153">
    <property type="entry name" value="CSAPPISMRASE"/>
</dbReference>
<dbReference type="SUPFAM" id="SSF50891">
    <property type="entry name" value="Cyclophilin-like"/>
    <property type="match status" value="1"/>
</dbReference>
<dbReference type="PROSITE" id="PS00170">
    <property type="entry name" value="CSA_PPIASE_1"/>
    <property type="match status" value="1"/>
</dbReference>
<dbReference type="PROSITE" id="PS50072">
    <property type="entry name" value="CSA_PPIASE_2"/>
    <property type="match status" value="1"/>
</dbReference>
<keyword id="KW-0413">Isomerase</keyword>
<keyword id="KW-0539">Nucleus</keyword>
<keyword id="KW-1185">Reference proteome</keyword>
<keyword id="KW-0697">Rotamase</keyword>